<feature type="chain" id="PRO_0000368577" description="ATP synthase subunit b 1">
    <location>
        <begin position="1"/>
        <end position="270"/>
    </location>
</feature>
<feature type="transmembrane region" description="Helical" evidence="1">
    <location>
        <begin position="2"/>
        <end position="22"/>
    </location>
</feature>
<proteinExistence type="inferred from homology"/>
<gene>
    <name evidence="1" type="primary">atpF1</name>
    <name type="ordered locus">Mmwyl1_1960</name>
</gene>
<sequence length="270" mass="30392">MLIDWFTVIAQLINFLVLVWLLKHFLYRPILNTIDAREKRIADELADADSKIAEAEQQREAFQQKNAEFDQQRTAQMNKVGEEAKAERTRLLEEVRQESDALRSKLKLALKNEQLSLKDSLSQRAREEVFAIVRKALSDLASTSLEASMADVFVKRLDALADAEKTSLQATFQESTEVLIVHTAFDLPKKQITQITKALHGLLGDGVVIEFATDANLISGIEIDSHGQKIGWSIADYLTTLTKRVNDVMLSHNAVQDESPELEKSQEQAS</sequence>
<dbReference type="EMBL" id="CP000749">
    <property type="protein sequence ID" value="ABR70884.1"/>
    <property type="molecule type" value="Genomic_DNA"/>
</dbReference>
<dbReference type="SMR" id="A6VWQ5"/>
<dbReference type="STRING" id="400668.Mmwyl1_1960"/>
<dbReference type="KEGG" id="mmw:Mmwyl1_1960"/>
<dbReference type="eggNOG" id="COG0711">
    <property type="taxonomic scope" value="Bacteria"/>
</dbReference>
<dbReference type="HOGENOM" id="CLU_070737_0_0_6"/>
<dbReference type="OrthoDB" id="466272at2"/>
<dbReference type="GO" id="GO:0005886">
    <property type="term" value="C:plasma membrane"/>
    <property type="evidence" value="ECO:0007669"/>
    <property type="project" value="UniProtKB-SubCell"/>
</dbReference>
<dbReference type="GO" id="GO:0045259">
    <property type="term" value="C:proton-transporting ATP synthase complex"/>
    <property type="evidence" value="ECO:0007669"/>
    <property type="project" value="UniProtKB-KW"/>
</dbReference>
<dbReference type="GO" id="GO:0046933">
    <property type="term" value="F:proton-transporting ATP synthase activity, rotational mechanism"/>
    <property type="evidence" value="ECO:0007669"/>
    <property type="project" value="UniProtKB-UniRule"/>
</dbReference>
<dbReference type="GO" id="GO:0046961">
    <property type="term" value="F:proton-transporting ATPase activity, rotational mechanism"/>
    <property type="evidence" value="ECO:0007669"/>
    <property type="project" value="TreeGrafter"/>
</dbReference>
<dbReference type="CDD" id="cd06503">
    <property type="entry name" value="ATP-synt_Fo_b"/>
    <property type="match status" value="1"/>
</dbReference>
<dbReference type="HAMAP" id="MF_01398">
    <property type="entry name" value="ATP_synth_b_bprime"/>
    <property type="match status" value="1"/>
</dbReference>
<dbReference type="InterPro" id="IPR017707">
    <property type="entry name" value="Alt_ATP_synth_F0_bsu"/>
</dbReference>
<dbReference type="InterPro" id="IPR002146">
    <property type="entry name" value="ATP_synth_b/b'su_bac/chlpt"/>
</dbReference>
<dbReference type="InterPro" id="IPR050059">
    <property type="entry name" value="ATP_synthase_B_chain"/>
</dbReference>
<dbReference type="NCBIfam" id="TIGR03321">
    <property type="entry name" value="alt_F1F0_F0_B"/>
    <property type="match status" value="1"/>
</dbReference>
<dbReference type="PANTHER" id="PTHR33445">
    <property type="entry name" value="ATP SYNTHASE SUBUNIT B', CHLOROPLASTIC"/>
    <property type="match status" value="1"/>
</dbReference>
<dbReference type="PANTHER" id="PTHR33445:SF2">
    <property type="entry name" value="ATP SYNTHASE SUBUNIT B', CHLOROPLASTIC"/>
    <property type="match status" value="1"/>
</dbReference>
<dbReference type="Pfam" id="PF00430">
    <property type="entry name" value="ATP-synt_B"/>
    <property type="match status" value="1"/>
</dbReference>
<organism>
    <name type="scientific">Marinomonas sp. (strain MWYL1)</name>
    <dbReference type="NCBI Taxonomy" id="400668"/>
    <lineage>
        <taxon>Bacteria</taxon>
        <taxon>Pseudomonadati</taxon>
        <taxon>Pseudomonadota</taxon>
        <taxon>Gammaproteobacteria</taxon>
        <taxon>Oceanospirillales</taxon>
        <taxon>Oceanospirillaceae</taxon>
        <taxon>Marinomonas</taxon>
    </lineage>
</organism>
<keyword id="KW-0066">ATP synthesis</keyword>
<keyword id="KW-0997">Cell inner membrane</keyword>
<keyword id="KW-1003">Cell membrane</keyword>
<keyword id="KW-0138">CF(0)</keyword>
<keyword id="KW-0375">Hydrogen ion transport</keyword>
<keyword id="KW-0406">Ion transport</keyword>
<keyword id="KW-0472">Membrane</keyword>
<keyword id="KW-0812">Transmembrane</keyword>
<keyword id="KW-1133">Transmembrane helix</keyword>
<keyword id="KW-0813">Transport</keyword>
<accession>A6VWQ5</accession>
<name>ATPF1_MARMS</name>
<reference key="1">
    <citation type="submission" date="2007-06" db="EMBL/GenBank/DDBJ databases">
        <title>Complete sequence of Marinomonas sp. MWYL1.</title>
        <authorList>
            <consortium name="US DOE Joint Genome Institute"/>
            <person name="Copeland A."/>
            <person name="Lucas S."/>
            <person name="Lapidus A."/>
            <person name="Barry K."/>
            <person name="Glavina del Rio T."/>
            <person name="Dalin E."/>
            <person name="Tice H."/>
            <person name="Pitluck S."/>
            <person name="Kiss H."/>
            <person name="Brettin T."/>
            <person name="Bruce D."/>
            <person name="Detter J.C."/>
            <person name="Han C."/>
            <person name="Schmutz J."/>
            <person name="Larimer F."/>
            <person name="Land M."/>
            <person name="Hauser L."/>
            <person name="Kyrpides N."/>
            <person name="Kim E."/>
            <person name="Johnston A.W.B."/>
            <person name="Todd J.D."/>
            <person name="Rogers R."/>
            <person name="Wexler M."/>
            <person name="Bond P.L."/>
            <person name="Li Y."/>
            <person name="Richardson P."/>
        </authorList>
    </citation>
    <scope>NUCLEOTIDE SEQUENCE [LARGE SCALE GENOMIC DNA]</scope>
    <source>
        <strain>MWYL1</strain>
    </source>
</reference>
<comment type="function">
    <text evidence="1">F(1)F(0) ATP synthase produces ATP from ADP in the presence of a proton or sodium gradient. F-type ATPases consist of two structural domains, F(1) containing the extramembraneous catalytic core and F(0) containing the membrane proton channel, linked together by a central stalk and a peripheral stalk. During catalysis, ATP synthesis in the catalytic domain of F(1) is coupled via a rotary mechanism of the central stalk subunits to proton translocation.</text>
</comment>
<comment type="function">
    <text evidence="1">Component of the F(0) channel, it forms part of the peripheral stalk, linking F(1) to F(0).</text>
</comment>
<comment type="subunit">
    <text evidence="1">F-type ATPases have 2 components, F(1) - the catalytic core - and F(0) - the membrane proton channel. F(1) has five subunits: alpha(3), beta(3), gamma(1), delta(1), epsilon(1). F(0) has three main subunits: a(1), b(2) and c(10-14). The alpha and beta chains form an alternating ring which encloses part of the gamma chain. F(1) is attached to F(0) by a central stalk formed by the gamma and epsilon chains, while a peripheral stalk is formed by the delta and b chains.</text>
</comment>
<comment type="subcellular location">
    <subcellularLocation>
        <location evidence="1">Cell inner membrane</location>
        <topology evidence="1">Single-pass membrane protein</topology>
    </subcellularLocation>
</comment>
<comment type="similarity">
    <text evidence="1">Belongs to the ATPase B chain family.</text>
</comment>
<evidence type="ECO:0000255" key="1">
    <source>
        <dbReference type="HAMAP-Rule" id="MF_01398"/>
    </source>
</evidence>
<protein>
    <recommendedName>
        <fullName evidence="1">ATP synthase subunit b 1</fullName>
    </recommendedName>
    <alternativeName>
        <fullName evidence="1">ATP synthase F(0) sector subunit b 1</fullName>
    </alternativeName>
    <alternativeName>
        <fullName evidence="1">ATPase subunit I 1</fullName>
    </alternativeName>
    <alternativeName>
        <fullName evidence="1">F-type ATPase subunit b 1</fullName>
        <shortName evidence="1">F-ATPase subunit b 1</shortName>
    </alternativeName>
</protein>